<evidence type="ECO:0000250" key="1"/>
<evidence type="ECO:0000250" key="2">
    <source>
        <dbReference type="UniProtKB" id="P07384"/>
    </source>
</evidence>
<evidence type="ECO:0000250" key="3">
    <source>
        <dbReference type="UniProtKB" id="P97571"/>
    </source>
</evidence>
<evidence type="ECO:0000255" key="4">
    <source>
        <dbReference type="PROSITE-ProRule" id="PRU00239"/>
    </source>
</evidence>
<evidence type="ECO:0000255" key="5">
    <source>
        <dbReference type="PROSITE-ProRule" id="PRU00448"/>
    </source>
</evidence>
<evidence type="ECO:0000305" key="6"/>
<evidence type="ECO:0000312" key="7">
    <source>
        <dbReference type="MGI" id="MGI:88263"/>
    </source>
</evidence>
<name>CAN1_MOUSE</name>
<proteinExistence type="evidence at protein level"/>
<organism>
    <name type="scientific">Mus musculus</name>
    <name type="common">Mouse</name>
    <dbReference type="NCBI Taxonomy" id="10090"/>
    <lineage>
        <taxon>Eukaryota</taxon>
        <taxon>Metazoa</taxon>
        <taxon>Chordata</taxon>
        <taxon>Craniata</taxon>
        <taxon>Vertebrata</taxon>
        <taxon>Euteleostomi</taxon>
        <taxon>Mammalia</taxon>
        <taxon>Eutheria</taxon>
        <taxon>Euarchontoglires</taxon>
        <taxon>Glires</taxon>
        <taxon>Rodentia</taxon>
        <taxon>Myomorpha</taxon>
        <taxon>Muroidea</taxon>
        <taxon>Muridae</taxon>
        <taxon>Murinae</taxon>
        <taxon>Mus</taxon>
        <taxon>Mus</taxon>
    </lineage>
</organism>
<dbReference type="EC" id="3.4.22.52" evidence="2"/>
<dbReference type="EMBL" id="AF021847">
    <property type="protein sequence ID" value="AAB72222.1"/>
    <property type="molecule type" value="mRNA"/>
</dbReference>
<dbReference type="EMBL" id="AF084459">
    <property type="protein sequence ID" value="AAC33134.1"/>
    <property type="molecule type" value="mRNA"/>
</dbReference>
<dbReference type="EMBL" id="BC026138">
    <property type="protein sequence ID" value="AAH26138.1"/>
    <property type="molecule type" value="mRNA"/>
</dbReference>
<dbReference type="CCDS" id="CCDS37893.1"/>
<dbReference type="RefSeq" id="NP_001103974.1">
    <property type="nucleotide sequence ID" value="NM_001110504.2"/>
</dbReference>
<dbReference type="RefSeq" id="NP_031626.1">
    <property type="nucleotide sequence ID" value="NM_007600.4"/>
</dbReference>
<dbReference type="SMR" id="O35350"/>
<dbReference type="BioGRID" id="198470">
    <property type="interactions" value="33"/>
</dbReference>
<dbReference type="ComplexPortal" id="CPX-4304">
    <property type="entry name" value="mu-Calpain complex"/>
</dbReference>
<dbReference type="DIP" id="DIP-60303N"/>
<dbReference type="FunCoup" id="O35350">
    <property type="interactions" value="1526"/>
</dbReference>
<dbReference type="IntAct" id="O35350">
    <property type="interactions" value="4"/>
</dbReference>
<dbReference type="STRING" id="10090.ENSMUSP00000025891"/>
<dbReference type="MEROPS" id="C02.001"/>
<dbReference type="iPTMnet" id="O35350"/>
<dbReference type="PhosphoSitePlus" id="O35350"/>
<dbReference type="SwissPalm" id="O35350"/>
<dbReference type="jPOST" id="O35350"/>
<dbReference type="PaxDb" id="10090-ENSMUSP00000025891"/>
<dbReference type="PeptideAtlas" id="O35350"/>
<dbReference type="ProteomicsDB" id="265432"/>
<dbReference type="Pumba" id="O35350"/>
<dbReference type="Antibodypedia" id="1034">
    <property type="antibodies" value="572 antibodies from 43 providers"/>
</dbReference>
<dbReference type="DNASU" id="12333"/>
<dbReference type="Ensembl" id="ENSMUST00000025891.11">
    <property type="protein sequence ID" value="ENSMUSP00000025891.9"/>
    <property type="gene ID" value="ENSMUSG00000024942.20"/>
</dbReference>
<dbReference type="Ensembl" id="ENSMUST00000164843.10">
    <property type="protein sequence ID" value="ENSMUSP00000127498.2"/>
    <property type="gene ID" value="ENSMUSG00000024942.20"/>
</dbReference>
<dbReference type="GeneID" id="12333"/>
<dbReference type="KEGG" id="mmu:12333"/>
<dbReference type="UCSC" id="uc008ggj.2">
    <property type="organism name" value="mouse"/>
</dbReference>
<dbReference type="AGR" id="MGI:88263"/>
<dbReference type="CTD" id="823"/>
<dbReference type="MGI" id="MGI:88263">
    <property type="gene designation" value="Capn1"/>
</dbReference>
<dbReference type="VEuPathDB" id="HostDB:ENSMUSG00000024942"/>
<dbReference type="eggNOG" id="KOG0045">
    <property type="taxonomic scope" value="Eukaryota"/>
</dbReference>
<dbReference type="GeneTree" id="ENSGT00940000159147"/>
<dbReference type="HOGENOM" id="CLU_010982_0_1_1"/>
<dbReference type="InParanoid" id="O35350"/>
<dbReference type="OMA" id="NSKEWNG"/>
<dbReference type="OrthoDB" id="424753at2759"/>
<dbReference type="PhylomeDB" id="O35350"/>
<dbReference type="TreeFam" id="TF314748"/>
<dbReference type="BRENDA" id="3.4.22.52">
    <property type="organism ID" value="3474"/>
</dbReference>
<dbReference type="Reactome" id="R-MMU-1474228">
    <property type="pathway name" value="Degradation of the extracellular matrix"/>
</dbReference>
<dbReference type="Reactome" id="R-MMU-6798695">
    <property type="pathway name" value="Neutrophil degranulation"/>
</dbReference>
<dbReference type="BioGRID-ORCS" id="12333">
    <property type="hits" value="3 hits in 78 CRISPR screens"/>
</dbReference>
<dbReference type="ChiTaRS" id="Capn1">
    <property type="organism name" value="mouse"/>
</dbReference>
<dbReference type="PRO" id="PR:O35350"/>
<dbReference type="Proteomes" id="UP000000589">
    <property type="component" value="Chromosome 19"/>
</dbReference>
<dbReference type="RNAct" id="O35350">
    <property type="molecule type" value="protein"/>
</dbReference>
<dbReference type="Bgee" id="ENSMUSG00000024942">
    <property type="expression patterns" value="Expressed in granulocyte and 139 other cell types or tissues"/>
</dbReference>
<dbReference type="ExpressionAtlas" id="O35350">
    <property type="expression patterns" value="baseline and differential"/>
</dbReference>
<dbReference type="GO" id="GO:0110158">
    <property type="term" value="C:calpain complex"/>
    <property type="evidence" value="ECO:0000250"/>
    <property type="project" value="ComplexPortal"/>
</dbReference>
<dbReference type="GO" id="GO:0001533">
    <property type="term" value="C:cornified envelope"/>
    <property type="evidence" value="ECO:0000314"/>
    <property type="project" value="MGI"/>
</dbReference>
<dbReference type="GO" id="GO:0005829">
    <property type="term" value="C:cytosol"/>
    <property type="evidence" value="ECO:0000314"/>
    <property type="project" value="MGI"/>
</dbReference>
<dbReference type="GO" id="GO:0005764">
    <property type="term" value="C:lysosome"/>
    <property type="evidence" value="ECO:0000314"/>
    <property type="project" value="MGI"/>
</dbReference>
<dbReference type="GO" id="GO:0005739">
    <property type="term" value="C:mitochondrion"/>
    <property type="evidence" value="ECO:0000314"/>
    <property type="project" value="MGI"/>
</dbReference>
<dbReference type="GO" id="GO:0005886">
    <property type="term" value="C:plasma membrane"/>
    <property type="evidence" value="ECO:0000250"/>
    <property type="project" value="UniProtKB"/>
</dbReference>
<dbReference type="GO" id="GO:0005509">
    <property type="term" value="F:calcium ion binding"/>
    <property type="evidence" value="ECO:0000250"/>
    <property type="project" value="UniProtKB"/>
</dbReference>
<dbReference type="GO" id="GO:0004198">
    <property type="term" value="F:calcium-dependent cysteine-type endopeptidase activity"/>
    <property type="evidence" value="ECO:0000314"/>
    <property type="project" value="MGI"/>
</dbReference>
<dbReference type="GO" id="GO:0060056">
    <property type="term" value="P:mammary gland involution"/>
    <property type="evidence" value="ECO:0000315"/>
    <property type="project" value="MGI"/>
</dbReference>
<dbReference type="GO" id="GO:0006508">
    <property type="term" value="P:proteolysis"/>
    <property type="evidence" value="ECO:0000315"/>
    <property type="project" value="MGI"/>
</dbReference>
<dbReference type="GO" id="GO:0032801">
    <property type="term" value="P:receptor catabolic process"/>
    <property type="evidence" value="ECO:0000314"/>
    <property type="project" value="MGI"/>
</dbReference>
<dbReference type="GO" id="GO:0050790">
    <property type="term" value="P:regulation of catalytic activity"/>
    <property type="evidence" value="ECO:0000250"/>
    <property type="project" value="UniProtKB"/>
</dbReference>
<dbReference type="GO" id="GO:0097264">
    <property type="term" value="P:self proteolysis"/>
    <property type="evidence" value="ECO:0000250"/>
    <property type="project" value="UniProtKB"/>
</dbReference>
<dbReference type="CDD" id="cd00214">
    <property type="entry name" value="Calpain_III"/>
    <property type="match status" value="1"/>
</dbReference>
<dbReference type="CDD" id="cd00044">
    <property type="entry name" value="CysPc"/>
    <property type="match status" value="1"/>
</dbReference>
<dbReference type="CDD" id="cd16198">
    <property type="entry name" value="EFh_PEF_CAPN1"/>
    <property type="match status" value="1"/>
</dbReference>
<dbReference type="FunFam" id="1.10.238.10:FF:000124">
    <property type="entry name" value="Calpain-1 catalytic subunit"/>
    <property type="match status" value="1"/>
</dbReference>
<dbReference type="FunFam" id="2.60.120.380:FF:000001">
    <property type="entry name" value="Calpain-1 catalytic subunit"/>
    <property type="match status" value="1"/>
</dbReference>
<dbReference type="FunFam" id="3.90.70.10:FF:000001">
    <property type="entry name" value="Calpain-1 catalytic subunit"/>
    <property type="match status" value="1"/>
</dbReference>
<dbReference type="Gene3D" id="2.60.120.380">
    <property type="match status" value="1"/>
</dbReference>
<dbReference type="Gene3D" id="3.90.70.10">
    <property type="entry name" value="Cysteine proteinases"/>
    <property type="match status" value="1"/>
</dbReference>
<dbReference type="Gene3D" id="1.10.238.10">
    <property type="entry name" value="EF-hand"/>
    <property type="match status" value="1"/>
</dbReference>
<dbReference type="InterPro" id="IPR033883">
    <property type="entry name" value="C2_III"/>
</dbReference>
<dbReference type="InterPro" id="IPR022684">
    <property type="entry name" value="Calpain_cysteine_protease"/>
</dbReference>
<dbReference type="InterPro" id="IPR022682">
    <property type="entry name" value="Calpain_domain_III"/>
</dbReference>
<dbReference type="InterPro" id="IPR022683">
    <property type="entry name" value="Calpain_III"/>
</dbReference>
<dbReference type="InterPro" id="IPR036213">
    <property type="entry name" value="Calpain_III_sf"/>
</dbReference>
<dbReference type="InterPro" id="IPR011992">
    <property type="entry name" value="EF-hand-dom_pair"/>
</dbReference>
<dbReference type="InterPro" id="IPR018247">
    <property type="entry name" value="EF_Hand_1_Ca_BS"/>
</dbReference>
<dbReference type="InterPro" id="IPR002048">
    <property type="entry name" value="EF_hand_dom"/>
</dbReference>
<dbReference type="InterPro" id="IPR038765">
    <property type="entry name" value="Papain-like_cys_pep_sf"/>
</dbReference>
<dbReference type="InterPro" id="IPR000169">
    <property type="entry name" value="Pept_cys_AS"/>
</dbReference>
<dbReference type="InterPro" id="IPR001300">
    <property type="entry name" value="Peptidase_C2_calpain_cat"/>
</dbReference>
<dbReference type="PANTHER" id="PTHR10183">
    <property type="entry name" value="CALPAIN"/>
    <property type="match status" value="1"/>
</dbReference>
<dbReference type="PANTHER" id="PTHR10183:SF284">
    <property type="entry name" value="CALPAIN-1 CATALYTIC SUBUNIT"/>
    <property type="match status" value="1"/>
</dbReference>
<dbReference type="Pfam" id="PF01067">
    <property type="entry name" value="Calpain_III"/>
    <property type="match status" value="1"/>
</dbReference>
<dbReference type="Pfam" id="PF13833">
    <property type="entry name" value="EF-hand_8"/>
    <property type="match status" value="1"/>
</dbReference>
<dbReference type="Pfam" id="PF00648">
    <property type="entry name" value="Peptidase_C2"/>
    <property type="match status" value="1"/>
</dbReference>
<dbReference type="PRINTS" id="PR00704">
    <property type="entry name" value="CALPAIN"/>
</dbReference>
<dbReference type="SMART" id="SM00720">
    <property type="entry name" value="calpain_III"/>
    <property type="match status" value="1"/>
</dbReference>
<dbReference type="SMART" id="SM00230">
    <property type="entry name" value="CysPc"/>
    <property type="match status" value="1"/>
</dbReference>
<dbReference type="SUPFAM" id="SSF49758">
    <property type="entry name" value="Calpain large subunit, middle domain (domain III)"/>
    <property type="match status" value="1"/>
</dbReference>
<dbReference type="SUPFAM" id="SSF54001">
    <property type="entry name" value="Cysteine proteinases"/>
    <property type="match status" value="1"/>
</dbReference>
<dbReference type="SUPFAM" id="SSF47473">
    <property type="entry name" value="EF-hand"/>
    <property type="match status" value="1"/>
</dbReference>
<dbReference type="PROSITE" id="PS50203">
    <property type="entry name" value="CALPAIN_CAT"/>
    <property type="match status" value="1"/>
</dbReference>
<dbReference type="PROSITE" id="PS00018">
    <property type="entry name" value="EF_HAND_1"/>
    <property type="match status" value="2"/>
</dbReference>
<dbReference type="PROSITE" id="PS50222">
    <property type="entry name" value="EF_HAND_2"/>
    <property type="match status" value="4"/>
</dbReference>
<dbReference type="PROSITE" id="PS00139">
    <property type="entry name" value="THIOL_PROTEASE_CYS"/>
    <property type="match status" value="1"/>
</dbReference>
<comment type="function">
    <text evidence="2">Calcium-regulated non-lysosomal thiol-protease which catalyzes limited proteolysis of substrates involved in cytoskeletal remodeling and signal transduction. Proteolytically cleaves CTBP1 at 'Asn-375', 'Gly-388' and 'His-410'. Cleaves and activates caspase-7 (CASP7).</text>
</comment>
<comment type="catalytic activity">
    <reaction evidence="2">
        <text>Broad endopeptidase specificity.</text>
        <dbReference type="EC" id="3.4.22.52"/>
    </reaction>
</comment>
<comment type="cofactor">
    <cofactor evidence="2">
        <name>Ca(2+)</name>
        <dbReference type="ChEBI" id="CHEBI:29108"/>
    </cofactor>
    <text evidence="2">Binds 4 Ca(2+) ions.</text>
</comment>
<comment type="activity regulation">
    <text evidence="2">Activated by micromolar concentrations of calcium and inhibited by calpastatin.</text>
</comment>
<comment type="subunit">
    <text evidence="3">Forms a heterodimer with a small (regulatory) subunit CAPNS1.</text>
</comment>
<comment type="subcellular location">
    <subcellularLocation>
        <location evidence="2">Cytoplasm</location>
    </subcellularLocation>
    <subcellularLocation>
        <location evidence="2">Cell membrane</location>
    </subcellularLocation>
    <text evidence="2">Translocates to the plasma membrane upon Ca(2+) binding.</text>
</comment>
<comment type="PTM">
    <text evidence="2">Undergoes calcium-induced successive autoproteolytic cleavages that generate a membrane-bound 78 kDa active form and an intracellular 75 kDa active form. Calpastatin reduces with high efficiency the transition from 78 kDa to 75 kDa calpain forms (By similarity).</text>
</comment>
<comment type="similarity">
    <text evidence="6">Belongs to the peptidase C2 family.</text>
</comment>
<accession>O35350</accession>
<accession>O88666</accession>
<protein>
    <recommendedName>
        <fullName evidence="6">Calpain-1 catalytic subunit</fullName>
        <ecNumber evidence="2">3.4.22.52</ecNumber>
    </recommendedName>
    <alternativeName>
        <fullName evidence="2">Calcium-activated neutral proteinase 1</fullName>
        <shortName evidence="2">CANP 1</shortName>
    </alternativeName>
    <alternativeName>
        <fullName evidence="2">Calpain mu-type</fullName>
    </alternativeName>
    <alternativeName>
        <fullName evidence="2">Calpain-1 large subunit</fullName>
    </alternativeName>
    <alternativeName>
        <fullName>Micromolar-calpain</fullName>
        <shortName evidence="2">muCANP</shortName>
    </alternativeName>
</protein>
<reference key="1">
    <citation type="submission" date="1997-08" db="EMBL/GenBank/DDBJ databases">
        <authorList>
            <person name="Poirier C."/>
            <person name="Poussard S."/>
            <person name="Faust D.M."/>
            <person name="Imaizumi-Sherrer T."/>
            <person name="Weiss M.C."/>
            <person name="Ducastaing A."/>
            <person name="Montarras D."/>
            <person name="Pinset C."/>
            <person name="Guenet J.-L."/>
        </authorList>
    </citation>
    <scope>NUCLEOTIDE SEQUENCE [MRNA]</scope>
    <source>
        <strain>CF-1</strain>
    </source>
</reference>
<reference key="2">
    <citation type="submission" date="1998-08" db="EMBL/GenBank/DDBJ databases">
        <title>Cloning and characterization of the cDNA and gene encoding the mouse mu-calpain large subunit protein.</title>
        <authorList>
            <person name="Sahr K.E."/>
            <person name="Andrabi S."/>
            <person name="Peters L.L."/>
            <person name="Chishti A.H."/>
        </authorList>
    </citation>
    <scope>NUCLEOTIDE SEQUENCE [MRNA]</scope>
    <source>
        <strain>129</strain>
    </source>
</reference>
<reference key="3">
    <citation type="journal article" date="2004" name="Genome Res.">
        <title>The status, quality, and expansion of the NIH full-length cDNA project: the Mammalian Gene Collection (MGC).</title>
        <authorList>
            <consortium name="The MGC Project Team"/>
        </authorList>
    </citation>
    <scope>NUCLEOTIDE SEQUENCE [LARGE SCALE MRNA]</scope>
    <source>
        <strain>FVB/N</strain>
        <tissue>Colon</tissue>
    </source>
</reference>
<reference key="4">
    <citation type="journal article" date="2006" name="Mol. Cell. Proteomics">
        <title>Comprehensive identification of phosphorylation sites in postsynaptic density preparations.</title>
        <authorList>
            <person name="Trinidad J.C."/>
            <person name="Specht C.G."/>
            <person name="Thalhammer A."/>
            <person name="Schoepfer R."/>
            <person name="Burlingame A.L."/>
        </authorList>
    </citation>
    <scope>IDENTIFICATION BY MASS SPECTROMETRY [LARGE SCALE ANALYSIS]</scope>
    <source>
        <tissue>Brain</tissue>
    </source>
</reference>
<reference key="5">
    <citation type="journal article" date="2010" name="Cell">
        <title>A tissue-specific atlas of mouse protein phosphorylation and expression.</title>
        <authorList>
            <person name="Huttlin E.L."/>
            <person name="Jedrychowski M.P."/>
            <person name="Elias J.E."/>
            <person name="Goswami T."/>
            <person name="Rad R."/>
            <person name="Beausoleil S.A."/>
            <person name="Villen J."/>
            <person name="Haas W."/>
            <person name="Sowa M.E."/>
            <person name="Gygi S.P."/>
        </authorList>
    </citation>
    <scope>IDENTIFICATION BY MASS SPECTROMETRY [LARGE SCALE ANALYSIS]</scope>
    <source>
        <tissue>Brain</tissue>
        <tissue>Brown adipose tissue</tissue>
        <tissue>Heart</tissue>
        <tissue>Kidney</tissue>
        <tissue>Liver</tissue>
        <tissue>Lung</tissue>
        <tissue>Pancreas</tissue>
        <tissue>Spleen</tissue>
        <tissue>Testis</tissue>
    </source>
</reference>
<sequence length="713" mass="82106">MTEELITPVYCTGVSAQVQKKRDKELGLGRHENAIKYLGQDYETLRARCLQSGVLFQDEAFPPVSHSLGFKELGPHSSKTYGIKWKRPTELMSNPQFIVDGATRTDICQGALGDCWLLAAIASLTLNETILHRVVPYGQSFQDGYAGIFHFQLWQFGEWVDVVIDDLLPTKDGKLVFVHSAQGNEFWSALLEKAYAKVNGSYEALSGGCTSEAFEDFTGGVTEWYDLQKAPSDLYQIILKALERGSLLGCSINISDIRDLEAITFKNLVRGHAYSVTGAKQVTYQGQRVNLIRMRNPWGEVEWKGPWSDSSYEWNKVDPYEREQLRVKMEDGEFWMSFRDFIREFTKLEICNLTPDALKSRTLRNWNTTFYEGTWRRGSTAGGCRNYPATFWVNPQFKIRLEEVDDADDYDNRESGCSFLLALMQKHRRRERRFGRDMETIGFAVYQVPRELAGQPVHLKRDFFLANASRAQSEHFINLREVSNRIRLPPGEYIVVPSTFEPNKEGDFLLRFFSEKKAGTQELDDQIQANLPDEKVLSEEEIDDNFKTLFSKLAGDDMEISVKELQTILNRIISKHKDLRTNGFSLESCRSMVNLMDRDGNGKLGLVEFNILWNRIRNYLTIFRKFDLDKSGSMSAYEMRMAIEAAGFKLNKKLHELIITRYSEPDLAVDFDNFVCCLVRLETMFRFFKLLDTDLDGVVTFDLFKWLQLTMFA</sequence>
<feature type="chain" id="PRO_0000207696" description="Calpain-1 catalytic subunit">
    <location>
        <begin position="1"/>
        <end position="713"/>
    </location>
</feature>
<feature type="domain" description="Calpain catalytic" evidence="4">
    <location>
        <begin position="55"/>
        <end position="354"/>
    </location>
</feature>
<feature type="domain" description="EF-hand 1" evidence="5">
    <location>
        <begin position="540"/>
        <end position="575"/>
    </location>
</feature>
<feature type="domain" description="EF-hand 2" evidence="5">
    <location>
        <begin position="584"/>
        <end position="617"/>
    </location>
</feature>
<feature type="domain" description="EF-hand 3" evidence="5">
    <location>
        <begin position="614"/>
        <end position="649"/>
    </location>
</feature>
<feature type="domain" description="EF-hand 4" evidence="5">
    <location>
        <begin position="679"/>
        <end position="713"/>
    </location>
</feature>
<feature type="region of interest" description="Domain III">
    <location>
        <begin position="355"/>
        <end position="525"/>
    </location>
</feature>
<feature type="region of interest" description="Linker">
    <location>
        <begin position="526"/>
        <end position="541"/>
    </location>
</feature>
<feature type="region of interest" description="Domain IV">
    <location>
        <begin position="542"/>
        <end position="712"/>
    </location>
</feature>
<feature type="active site" evidence="1">
    <location>
        <position position="115"/>
    </location>
</feature>
<feature type="active site" evidence="1">
    <location>
        <position position="272"/>
    </location>
</feature>
<feature type="active site" evidence="1">
    <location>
        <position position="296"/>
    </location>
</feature>
<feature type="binding site" evidence="6">
    <location>
        <position position="109"/>
    </location>
    <ligand>
        <name>Ca(2+)</name>
        <dbReference type="ChEBI" id="CHEBI:29108"/>
        <label>1</label>
    </ligand>
</feature>
<feature type="binding site" evidence="6">
    <location>
        <position position="114"/>
    </location>
    <ligand>
        <name>Ca(2+)</name>
        <dbReference type="ChEBI" id="CHEBI:29108"/>
        <label>1</label>
    </ligand>
</feature>
<feature type="binding site" evidence="6">
    <location>
        <position position="318"/>
    </location>
    <ligand>
        <name>Ca(2+)</name>
        <dbReference type="ChEBI" id="CHEBI:29108"/>
        <label>2</label>
    </ligand>
</feature>
<feature type="binding site" evidence="6">
    <location>
        <position position="323"/>
    </location>
    <ligand>
        <name>Ca(2+)</name>
        <dbReference type="ChEBI" id="CHEBI:29108"/>
        <label>2</label>
    </ligand>
</feature>
<feature type="binding site" evidence="5">
    <location>
        <position position="597"/>
    </location>
    <ligand>
        <name>Ca(2+)</name>
        <dbReference type="ChEBI" id="CHEBI:29108"/>
        <label>3</label>
    </ligand>
</feature>
<feature type="binding site" evidence="5">
    <location>
        <position position="599"/>
    </location>
    <ligand>
        <name>Ca(2+)</name>
        <dbReference type="ChEBI" id="CHEBI:29108"/>
        <label>3</label>
    </ligand>
</feature>
<feature type="binding site" evidence="5">
    <location>
        <position position="601"/>
    </location>
    <ligand>
        <name>Ca(2+)</name>
        <dbReference type="ChEBI" id="CHEBI:29108"/>
        <label>3</label>
    </ligand>
</feature>
<feature type="binding site" evidence="5">
    <location>
        <position position="603"/>
    </location>
    <ligand>
        <name>Ca(2+)</name>
        <dbReference type="ChEBI" id="CHEBI:29108"/>
        <label>3</label>
    </ligand>
</feature>
<feature type="binding site" evidence="5">
    <location>
        <position position="608"/>
    </location>
    <ligand>
        <name>Ca(2+)</name>
        <dbReference type="ChEBI" id="CHEBI:29108"/>
        <label>3</label>
    </ligand>
</feature>
<feature type="binding site" evidence="5">
    <location>
        <position position="627"/>
    </location>
    <ligand>
        <name>Ca(2+)</name>
        <dbReference type="ChEBI" id="CHEBI:29108"/>
        <label>4</label>
    </ligand>
</feature>
<feature type="binding site" evidence="5">
    <location>
        <position position="629"/>
    </location>
    <ligand>
        <name>Ca(2+)</name>
        <dbReference type="ChEBI" id="CHEBI:29108"/>
        <label>4</label>
    </ligand>
</feature>
<feature type="binding site" evidence="5">
    <location>
        <position position="631"/>
    </location>
    <ligand>
        <name>Ca(2+)</name>
        <dbReference type="ChEBI" id="CHEBI:29108"/>
        <label>4</label>
    </ligand>
</feature>
<feature type="binding site" evidence="5">
    <location>
        <position position="633"/>
    </location>
    <ligand>
        <name>Ca(2+)</name>
        <dbReference type="ChEBI" id="CHEBI:29108"/>
        <label>4</label>
    </ligand>
</feature>
<feature type="binding site" evidence="5">
    <location>
        <position position="638"/>
    </location>
    <ligand>
        <name>Ca(2+)</name>
        <dbReference type="ChEBI" id="CHEBI:29108"/>
        <label>4</label>
    </ligand>
</feature>
<feature type="site" description="Cleavage; for 78 kDa form" evidence="1">
    <location>
        <begin position="15"/>
        <end position="16"/>
    </location>
</feature>
<feature type="site" description="Cleavage; for 75 kDa form" evidence="1">
    <location>
        <begin position="27"/>
        <end position="28"/>
    </location>
</feature>
<feature type="modified residue" description="Phosphothreonine" evidence="2">
    <location>
        <position position="354"/>
    </location>
</feature>
<feature type="sequence conflict" description="In Ref. 2; AAC33134." evidence="6" ref="2">
    <original>L</original>
    <variation>P</variation>
    <location>
        <position position="488"/>
    </location>
</feature>
<feature type="sequence conflict" description="In Ref. 2; AAC33134." evidence="6" ref="2">
    <original>D</original>
    <variation>N</variation>
    <location>
        <position position="696"/>
    </location>
</feature>
<keyword id="KW-0068">Autocatalytic cleavage</keyword>
<keyword id="KW-0106">Calcium</keyword>
<keyword id="KW-1003">Cell membrane</keyword>
<keyword id="KW-0963">Cytoplasm</keyword>
<keyword id="KW-0378">Hydrolase</keyword>
<keyword id="KW-0472">Membrane</keyword>
<keyword id="KW-0479">Metal-binding</keyword>
<keyword id="KW-0597">Phosphoprotein</keyword>
<keyword id="KW-0645">Protease</keyword>
<keyword id="KW-1185">Reference proteome</keyword>
<keyword id="KW-0677">Repeat</keyword>
<keyword id="KW-0788">Thiol protease</keyword>
<gene>
    <name evidence="7" type="primary">Capn1</name>
    <name type="synonym">Canp1</name>
    <name evidence="2" type="synonym">Capa1</name>
</gene>